<reference key="1">
    <citation type="journal article" date="2008" name="PLoS ONE">
        <title>Comparative analysis of Acinetobacters: three genomes for three lifestyles.</title>
        <authorList>
            <person name="Vallenet D."/>
            <person name="Nordmann P."/>
            <person name="Barbe V."/>
            <person name="Poirel L."/>
            <person name="Mangenot S."/>
            <person name="Bataille E."/>
            <person name="Dossat C."/>
            <person name="Gas S."/>
            <person name="Kreimeyer A."/>
            <person name="Lenoble P."/>
            <person name="Oztas S."/>
            <person name="Poulain J."/>
            <person name="Segurens B."/>
            <person name="Robert C."/>
            <person name="Abergel C."/>
            <person name="Claverie J.-M."/>
            <person name="Raoult D."/>
            <person name="Medigue C."/>
            <person name="Weissenbach J."/>
            <person name="Cruveiller S."/>
        </authorList>
    </citation>
    <scope>NUCLEOTIDE SEQUENCE [LARGE SCALE GENOMIC DNA]</scope>
    <source>
        <strain>SDF</strain>
    </source>
</reference>
<evidence type="ECO:0000255" key="1">
    <source>
        <dbReference type="HAMAP-Rule" id="MF_00632"/>
    </source>
</evidence>
<protein>
    <recommendedName>
        <fullName evidence="1">Nucleotide-binding protein ABSDF0503</fullName>
    </recommendedName>
</protein>
<feature type="chain" id="PRO_1000130589" description="Nucleotide-binding protein ABSDF0503">
    <location>
        <begin position="1"/>
        <end position="162"/>
    </location>
</feature>
<accession>B0VQZ2</accession>
<sequence length="162" mass="18698">MPSFDIVSELELFEVNHAVQNTQKEIATRFDFRGHDVSIELNEKNKEIKISTESDFQCEQVYNMLENHFYKRKIDVQALDPQKATASGKNFVQVIKLKDGLDSDTAKKINKAIKESGIKVQSSIQGDKIRVTDKKRDTLQQVMAFLREQQFGLPLQFNNFKD</sequence>
<name>Y503_ACIBS</name>
<organism>
    <name type="scientific">Acinetobacter baumannii (strain SDF)</name>
    <dbReference type="NCBI Taxonomy" id="509170"/>
    <lineage>
        <taxon>Bacteria</taxon>
        <taxon>Pseudomonadati</taxon>
        <taxon>Pseudomonadota</taxon>
        <taxon>Gammaproteobacteria</taxon>
        <taxon>Moraxellales</taxon>
        <taxon>Moraxellaceae</taxon>
        <taxon>Acinetobacter</taxon>
        <taxon>Acinetobacter calcoaceticus/baumannii complex</taxon>
    </lineage>
</organism>
<keyword id="KW-0547">Nucleotide-binding</keyword>
<proteinExistence type="inferred from homology"/>
<comment type="function">
    <text evidence="1">Nucleotide-binding protein.</text>
</comment>
<comment type="similarity">
    <text evidence="1">Belongs to the YajQ family.</text>
</comment>
<dbReference type="EMBL" id="CU468230">
    <property type="protein sequence ID" value="CAO99888.1"/>
    <property type="molecule type" value="Genomic_DNA"/>
</dbReference>
<dbReference type="SMR" id="B0VQZ2"/>
<dbReference type="KEGG" id="abm:ABSDF0503"/>
<dbReference type="HOGENOM" id="CLU_099839_1_0_6"/>
<dbReference type="BioCyc" id="ABAU509170:GCL9-417-MONOMER"/>
<dbReference type="Proteomes" id="UP000001741">
    <property type="component" value="Chromosome"/>
</dbReference>
<dbReference type="GO" id="GO:0005829">
    <property type="term" value="C:cytosol"/>
    <property type="evidence" value="ECO:0007669"/>
    <property type="project" value="TreeGrafter"/>
</dbReference>
<dbReference type="GO" id="GO:0000166">
    <property type="term" value="F:nucleotide binding"/>
    <property type="evidence" value="ECO:0007669"/>
    <property type="project" value="TreeGrafter"/>
</dbReference>
<dbReference type="CDD" id="cd11740">
    <property type="entry name" value="YajQ_like"/>
    <property type="match status" value="1"/>
</dbReference>
<dbReference type="Gene3D" id="3.30.70.860">
    <property type="match status" value="1"/>
</dbReference>
<dbReference type="Gene3D" id="3.30.70.990">
    <property type="entry name" value="YajQ-like, domain 2"/>
    <property type="match status" value="1"/>
</dbReference>
<dbReference type="HAMAP" id="MF_00632">
    <property type="entry name" value="YajQ"/>
    <property type="match status" value="1"/>
</dbReference>
<dbReference type="InterPro" id="IPR007551">
    <property type="entry name" value="DUF520"/>
</dbReference>
<dbReference type="InterPro" id="IPR035571">
    <property type="entry name" value="UPF0234-like_C"/>
</dbReference>
<dbReference type="InterPro" id="IPR035570">
    <property type="entry name" value="UPF0234_N"/>
</dbReference>
<dbReference type="InterPro" id="IPR036183">
    <property type="entry name" value="YajQ-like_sf"/>
</dbReference>
<dbReference type="NCBIfam" id="NF003819">
    <property type="entry name" value="PRK05412.1"/>
    <property type="match status" value="1"/>
</dbReference>
<dbReference type="PANTHER" id="PTHR30476">
    <property type="entry name" value="UPF0234 PROTEIN YAJQ"/>
    <property type="match status" value="1"/>
</dbReference>
<dbReference type="PANTHER" id="PTHR30476:SF0">
    <property type="entry name" value="UPF0234 PROTEIN YAJQ"/>
    <property type="match status" value="1"/>
</dbReference>
<dbReference type="Pfam" id="PF04461">
    <property type="entry name" value="DUF520"/>
    <property type="match status" value="1"/>
</dbReference>
<dbReference type="SUPFAM" id="SSF89963">
    <property type="entry name" value="YajQ-like"/>
    <property type="match status" value="2"/>
</dbReference>
<gene>
    <name type="ordered locus">ABSDF0503</name>
</gene>